<reference key="1">
    <citation type="journal article" date="2006" name="PLoS Biol.">
        <title>Metabolic complementarity and genomics of the dual bacterial symbiosis of sharpshooters.</title>
        <authorList>
            <person name="Wu D."/>
            <person name="Daugherty S.C."/>
            <person name="Van Aken S.E."/>
            <person name="Pai G.H."/>
            <person name="Watkins K.L."/>
            <person name="Khouri H."/>
            <person name="Tallon L.J."/>
            <person name="Zaborsky J.M."/>
            <person name="Dunbar H.E."/>
            <person name="Tran P.L."/>
            <person name="Moran N.A."/>
            <person name="Eisen J.A."/>
        </authorList>
    </citation>
    <scope>NUCLEOTIDE SEQUENCE [LARGE SCALE GENOMIC DNA]</scope>
</reference>
<organism>
    <name type="scientific">Baumannia cicadellinicola subsp. Homalodisca coagulata</name>
    <dbReference type="NCBI Taxonomy" id="374463"/>
    <lineage>
        <taxon>Bacteria</taxon>
        <taxon>Pseudomonadati</taxon>
        <taxon>Pseudomonadota</taxon>
        <taxon>Gammaproteobacteria</taxon>
        <taxon>Candidatus Palibaumannia</taxon>
    </lineage>
</organism>
<protein>
    <recommendedName>
        <fullName evidence="1">Small ribosomal subunit protein bS6</fullName>
    </recommendedName>
    <alternativeName>
        <fullName evidence="2">30S ribosomal protein S6</fullName>
    </alternativeName>
</protein>
<feature type="chain" id="PRO_1000005220" description="Small ribosomal subunit protein bS6">
    <location>
        <begin position="1"/>
        <end position="125"/>
    </location>
</feature>
<evidence type="ECO:0000255" key="1">
    <source>
        <dbReference type="HAMAP-Rule" id="MF_00360"/>
    </source>
</evidence>
<evidence type="ECO:0000305" key="2"/>
<comment type="function">
    <text evidence="1">Binds together with bS18 to 16S ribosomal RNA.</text>
</comment>
<comment type="similarity">
    <text evidence="1">Belongs to the bacterial ribosomal protein bS6 family.</text>
</comment>
<accession>Q1LSR2</accession>
<keyword id="KW-1185">Reference proteome</keyword>
<keyword id="KW-0687">Ribonucleoprotein</keyword>
<keyword id="KW-0689">Ribosomal protein</keyword>
<keyword id="KW-0694">RNA-binding</keyword>
<keyword id="KW-0699">rRNA-binding</keyword>
<proteinExistence type="inferred from homology"/>
<sequence>MRHYEIVLMVHPDQSEQVSRMIERYSTVITSAQGKIHRLEDWGRRQLSYPIKKLHKAHYVLINLEASQKVMDELSKYLRFNEAIIRSMIMRVKHIVTEASPMVKTKDDNLVTEINKYSEEKNSEL</sequence>
<dbReference type="EMBL" id="CP000238">
    <property type="protein sequence ID" value="ABF14082.1"/>
    <property type="molecule type" value="Genomic_DNA"/>
</dbReference>
<dbReference type="RefSeq" id="WP_011520735.1">
    <property type="nucleotide sequence ID" value="NC_007984.1"/>
</dbReference>
<dbReference type="SMR" id="Q1LSR2"/>
<dbReference type="STRING" id="374463.BCI_0574"/>
<dbReference type="KEGG" id="bci:BCI_0574"/>
<dbReference type="HOGENOM" id="CLU_113441_6_1_6"/>
<dbReference type="OrthoDB" id="9812702at2"/>
<dbReference type="Proteomes" id="UP000002427">
    <property type="component" value="Chromosome"/>
</dbReference>
<dbReference type="GO" id="GO:0022627">
    <property type="term" value="C:cytosolic small ribosomal subunit"/>
    <property type="evidence" value="ECO:0007669"/>
    <property type="project" value="TreeGrafter"/>
</dbReference>
<dbReference type="GO" id="GO:0070181">
    <property type="term" value="F:small ribosomal subunit rRNA binding"/>
    <property type="evidence" value="ECO:0007669"/>
    <property type="project" value="TreeGrafter"/>
</dbReference>
<dbReference type="GO" id="GO:0003735">
    <property type="term" value="F:structural constituent of ribosome"/>
    <property type="evidence" value="ECO:0007669"/>
    <property type="project" value="InterPro"/>
</dbReference>
<dbReference type="GO" id="GO:0006412">
    <property type="term" value="P:translation"/>
    <property type="evidence" value="ECO:0007669"/>
    <property type="project" value="UniProtKB-UniRule"/>
</dbReference>
<dbReference type="CDD" id="cd00473">
    <property type="entry name" value="bS6"/>
    <property type="match status" value="1"/>
</dbReference>
<dbReference type="Gene3D" id="3.30.70.60">
    <property type="match status" value="1"/>
</dbReference>
<dbReference type="HAMAP" id="MF_00360">
    <property type="entry name" value="Ribosomal_bS6"/>
    <property type="match status" value="1"/>
</dbReference>
<dbReference type="InterPro" id="IPR000529">
    <property type="entry name" value="Ribosomal_bS6"/>
</dbReference>
<dbReference type="InterPro" id="IPR020815">
    <property type="entry name" value="Ribosomal_bS6_CS"/>
</dbReference>
<dbReference type="InterPro" id="IPR035980">
    <property type="entry name" value="Ribosomal_bS6_sf"/>
</dbReference>
<dbReference type="InterPro" id="IPR020814">
    <property type="entry name" value="Ribosomal_S6_plastid/chlpt"/>
</dbReference>
<dbReference type="InterPro" id="IPR014717">
    <property type="entry name" value="Transl_elong_EF1B/ribsomal_bS6"/>
</dbReference>
<dbReference type="NCBIfam" id="TIGR00166">
    <property type="entry name" value="S6"/>
    <property type="match status" value="1"/>
</dbReference>
<dbReference type="PANTHER" id="PTHR21011">
    <property type="entry name" value="MITOCHONDRIAL 28S RIBOSOMAL PROTEIN S6"/>
    <property type="match status" value="1"/>
</dbReference>
<dbReference type="PANTHER" id="PTHR21011:SF1">
    <property type="entry name" value="SMALL RIBOSOMAL SUBUNIT PROTEIN BS6M"/>
    <property type="match status" value="1"/>
</dbReference>
<dbReference type="Pfam" id="PF01250">
    <property type="entry name" value="Ribosomal_S6"/>
    <property type="match status" value="1"/>
</dbReference>
<dbReference type="SUPFAM" id="SSF54995">
    <property type="entry name" value="Ribosomal protein S6"/>
    <property type="match status" value="1"/>
</dbReference>
<dbReference type="PROSITE" id="PS01048">
    <property type="entry name" value="RIBOSOMAL_S6"/>
    <property type="match status" value="1"/>
</dbReference>
<gene>
    <name evidence="1" type="primary">rpsF</name>
    <name type="ordered locus">BCI_0574</name>
</gene>
<name>RS6_BAUCH</name>